<feature type="chain" id="PRO_0000156235" description="Phosphopantetheine adenylyltransferase">
    <location>
        <begin position="1"/>
        <end position="161"/>
    </location>
</feature>
<feature type="binding site" evidence="1">
    <location>
        <begin position="9"/>
        <end position="10"/>
    </location>
    <ligand>
        <name>ATP</name>
        <dbReference type="ChEBI" id="CHEBI:30616"/>
    </ligand>
</feature>
<feature type="binding site" evidence="1">
    <location>
        <position position="9"/>
    </location>
    <ligand>
        <name>substrate</name>
    </ligand>
</feature>
<feature type="binding site" evidence="1">
    <location>
        <position position="17"/>
    </location>
    <ligand>
        <name>ATP</name>
        <dbReference type="ChEBI" id="CHEBI:30616"/>
    </ligand>
</feature>
<feature type="binding site" evidence="1">
    <location>
        <position position="41"/>
    </location>
    <ligand>
        <name>substrate</name>
    </ligand>
</feature>
<feature type="binding site" evidence="1">
    <location>
        <position position="73"/>
    </location>
    <ligand>
        <name>substrate</name>
    </ligand>
</feature>
<feature type="binding site" evidence="1">
    <location>
        <position position="87"/>
    </location>
    <ligand>
        <name>substrate</name>
    </ligand>
</feature>
<feature type="binding site" evidence="1">
    <location>
        <begin position="88"/>
        <end position="90"/>
    </location>
    <ligand>
        <name>ATP</name>
        <dbReference type="ChEBI" id="CHEBI:30616"/>
    </ligand>
</feature>
<feature type="binding site" evidence="1">
    <location>
        <position position="98"/>
    </location>
    <ligand>
        <name>ATP</name>
        <dbReference type="ChEBI" id="CHEBI:30616"/>
    </ligand>
</feature>
<feature type="binding site" evidence="1">
    <location>
        <begin position="122"/>
        <end position="128"/>
    </location>
    <ligand>
        <name>ATP</name>
        <dbReference type="ChEBI" id="CHEBI:30616"/>
    </ligand>
</feature>
<feature type="site" description="Transition state stabilizer" evidence="1">
    <location>
        <position position="17"/>
    </location>
</feature>
<sequence length="161" mass="17628">MTGAVCPGSFDPVTLGHVDIFERAAAQFDEVVVAILVNPAKTGMFDLDERIAMVKESTTHLPNLRVQVGHGLVVDFVRSCGMTAIVKGLRTGTDFEYELQMAQMNKHIAGVDTFFVATAPRYSFVSSSLAKEVAMLGGDVSELLPEPVNRRLRDRLNTERT</sequence>
<proteinExistence type="inferred from homology"/>
<evidence type="ECO:0000255" key="1">
    <source>
        <dbReference type="HAMAP-Rule" id="MF_00151"/>
    </source>
</evidence>
<reference key="1">
    <citation type="journal article" date="2003" name="Proc. Natl. Acad. Sci. U.S.A.">
        <title>The complete genome sequence of Mycobacterium bovis.</title>
        <authorList>
            <person name="Garnier T."/>
            <person name="Eiglmeier K."/>
            <person name="Camus J.-C."/>
            <person name="Medina N."/>
            <person name="Mansoor H."/>
            <person name="Pryor M."/>
            <person name="Duthoy S."/>
            <person name="Grondin S."/>
            <person name="Lacroix C."/>
            <person name="Monsempe C."/>
            <person name="Simon S."/>
            <person name="Harris B."/>
            <person name="Atkin R."/>
            <person name="Doggett J."/>
            <person name="Mayes R."/>
            <person name="Keating L."/>
            <person name="Wheeler P.R."/>
            <person name="Parkhill J."/>
            <person name="Barrell B.G."/>
            <person name="Cole S.T."/>
            <person name="Gordon S.V."/>
            <person name="Hewinson R.G."/>
        </authorList>
    </citation>
    <scope>NUCLEOTIDE SEQUENCE [LARGE SCALE GENOMIC DNA]</scope>
    <source>
        <strain>ATCC BAA-935 / AF2122/97</strain>
    </source>
</reference>
<reference key="2">
    <citation type="journal article" date="2017" name="Genome Announc.">
        <title>Updated reference genome sequence and annotation of Mycobacterium bovis AF2122/97.</title>
        <authorList>
            <person name="Malone K.M."/>
            <person name="Farrell D."/>
            <person name="Stuber T.P."/>
            <person name="Schubert O.T."/>
            <person name="Aebersold R."/>
            <person name="Robbe-Austerman S."/>
            <person name="Gordon S.V."/>
        </authorList>
    </citation>
    <scope>NUCLEOTIDE SEQUENCE [LARGE SCALE GENOMIC DNA]</scope>
    <scope>GENOME REANNOTATION</scope>
    <source>
        <strain>ATCC BAA-935 / AF2122/97</strain>
    </source>
</reference>
<protein>
    <recommendedName>
        <fullName evidence="1">Phosphopantetheine adenylyltransferase</fullName>
        <ecNumber evidence="1">2.7.7.3</ecNumber>
    </recommendedName>
    <alternativeName>
        <fullName evidence="1">Dephospho-CoA pyrophosphorylase</fullName>
    </alternativeName>
    <alternativeName>
        <fullName evidence="1">Pantetheine-phosphate adenylyltransferase</fullName>
        <shortName evidence="1">PPAT</shortName>
    </alternativeName>
</protein>
<name>COAD_MYCBO</name>
<gene>
    <name evidence="1" type="primary">coaD</name>
    <name type="synonym">kdtB</name>
    <name type="ordered locus">BQ2027_MB2989C</name>
</gene>
<keyword id="KW-0067">ATP-binding</keyword>
<keyword id="KW-0173">Coenzyme A biosynthesis</keyword>
<keyword id="KW-0963">Cytoplasm</keyword>
<keyword id="KW-0460">Magnesium</keyword>
<keyword id="KW-0547">Nucleotide-binding</keyword>
<keyword id="KW-0548">Nucleotidyltransferase</keyword>
<keyword id="KW-1185">Reference proteome</keyword>
<keyword id="KW-0808">Transferase</keyword>
<dbReference type="EC" id="2.7.7.3" evidence="1"/>
<dbReference type="EMBL" id="LT708304">
    <property type="protein sequence ID" value="SIU01612.1"/>
    <property type="molecule type" value="Genomic_DNA"/>
</dbReference>
<dbReference type="RefSeq" id="NP_856634.1">
    <property type="nucleotide sequence ID" value="NC_002945.3"/>
</dbReference>
<dbReference type="RefSeq" id="WP_003414998.1">
    <property type="nucleotide sequence ID" value="NC_002945.4"/>
</dbReference>
<dbReference type="SMR" id="P0A531"/>
<dbReference type="GeneID" id="45426954"/>
<dbReference type="KEGG" id="mbo:BQ2027_MB2989C"/>
<dbReference type="PATRIC" id="fig|233413.5.peg.3286"/>
<dbReference type="UniPathway" id="UPA00241">
    <property type="reaction ID" value="UER00355"/>
</dbReference>
<dbReference type="Proteomes" id="UP000001419">
    <property type="component" value="Chromosome"/>
</dbReference>
<dbReference type="GO" id="GO:0005737">
    <property type="term" value="C:cytoplasm"/>
    <property type="evidence" value="ECO:0007669"/>
    <property type="project" value="UniProtKB-SubCell"/>
</dbReference>
<dbReference type="GO" id="GO:0005524">
    <property type="term" value="F:ATP binding"/>
    <property type="evidence" value="ECO:0007669"/>
    <property type="project" value="UniProtKB-KW"/>
</dbReference>
<dbReference type="GO" id="GO:0004595">
    <property type="term" value="F:pantetheine-phosphate adenylyltransferase activity"/>
    <property type="evidence" value="ECO:0007669"/>
    <property type="project" value="UniProtKB-UniRule"/>
</dbReference>
<dbReference type="GO" id="GO:0015937">
    <property type="term" value="P:coenzyme A biosynthetic process"/>
    <property type="evidence" value="ECO:0007669"/>
    <property type="project" value="UniProtKB-UniRule"/>
</dbReference>
<dbReference type="CDD" id="cd02163">
    <property type="entry name" value="PPAT"/>
    <property type="match status" value="1"/>
</dbReference>
<dbReference type="FunFam" id="3.40.50.620:FF:000012">
    <property type="entry name" value="Phosphopantetheine adenylyltransferase"/>
    <property type="match status" value="1"/>
</dbReference>
<dbReference type="Gene3D" id="3.40.50.620">
    <property type="entry name" value="HUPs"/>
    <property type="match status" value="1"/>
</dbReference>
<dbReference type="HAMAP" id="MF_00151">
    <property type="entry name" value="PPAT_bact"/>
    <property type="match status" value="1"/>
</dbReference>
<dbReference type="InterPro" id="IPR004821">
    <property type="entry name" value="Cyt_trans-like"/>
</dbReference>
<dbReference type="InterPro" id="IPR001980">
    <property type="entry name" value="PPAT"/>
</dbReference>
<dbReference type="InterPro" id="IPR014729">
    <property type="entry name" value="Rossmann-like_a/b/a_fold"/>
</dbReference>
<dbReference type="NCBIfam" id="TIGR01510">
    <property type="entry name" value="coaD_prev_kdtB"/>
    <property type="match status" value="1"/>
</dbReference>
<dbReference type="NCBIfam" id="TIGR00125">
    <property type="entry name" value="cyt_tran_rel"/>
    <property type="match status" value="1"/>
</dbReference>
<dbReference type="PANTHER" id="PTHR21342">
    <property type="entry name" value="PHOSPHOPANTETHEINE ADENYLYLTRANSFERASE"/>
    <property type="match status" value="1"/>
</dbReference>
<dbReference type="PANTHER" id="PTHR21342:SF1">
    <property type="entry name" value="PHOSPHOPANTETHEINE ADENYLYLTRANSFERASE"/>
    <property type="match status" value="1"/>
</dbReference>
<dbReference type="Pfam" id="PF01467">
    <property type="entry name" value="CTP_transf_like"/>
    <property type="match status" value="1"/>
</dbReference>
<dbReference type="PRINTS" id="PR01020">
    <property type="entry name" value="LPSBIOSNTHSS"/>
</dbReference>
<dbReference type="SUPFAM" id="SSF52374">
    <property type="entry name" value="Nucleotidylyl transferase"/>
    <property type="match status" value="1"/>
</dbReference>
<organism>
    <name type="scientific">Mycobacterium bovis (strain ATCC BAA-935 / AF2122/97)</name>
    <dbReference type="NCBI Taxonomy" id="233413"/>
    <lineage>
        <taxon>Bacteria</taxon>
        <taxon>Bacillati</taxon>
        <taxon>Actinomycetota</taxon>
        <taxon>Actinomycetes</taxon>
        <taxon>Mycobacteriales</taxon>
        <taxon>Mycobacteriaceae</taxon>
        <taxon>Mycobacterium</taxon>
        <taxon>Mycobacterium tuberculosis complex</taxon>
    </lineage>
</organism>
<accession>P0A531</accession>
<accession>A0A1R3Y2P1</accession>
<accession>O08023</accession>
<accession>Q50452</accession>
<accession>X2BMZ6</accession>
<comment type="function">
    <text evidence="1">Reversibly transfers an adenylyl group from ATP to 4'-phosphopantetheine, yielding dephospho-CoA (dPCoA) and pyrophosphate.</text>
</comment>
<comment type="catalytic activity">
    <reaction evidence="1">
        <text>(R)-4'-phosphopantetheine + ATP + H(+) = 3'-dephospho-CoA + diphosphate</text>
        <dbReference type="Rhea" id="RHEA:19801"/>
        <dbReference type="ChEBI" id="CHEBI:15378"/>
        <dbReference type="ChEBI" id="CHEBI:30616"/>
        <dbReference type="ChEBI" id="CHEBI:33019"/>
        <dbReference type="ChEBI" id="CHEBI:57328"/>
        <dbReference type="ChEBI" id="CHEBI:61723"/>
        <dbReference type="EC" id="2.7.7.3"/>
    </reaction>
</comment>
<comment type="cofactor">
    <cofactor evidence="1">
        <name>Mg(2+)</name>
        <dbReference type="ChEBI" id="CHEBI:18420"/>
    </cofactor>
</comment>
<comment type="pathway">
    <text evidence="1">Cofactor biosynthesis; coenzyme A biosynthesis; CoA from (R)-pantothenate: step 4/5.</text>
</comment>
<comment type="subunit">
    <text evidence="1">Homohexamer.</text>
</comment>
<comment type="subcellular location">
    <subcellularLocation>
        <location evidence="1">Cytoplasm</location>
    </subcellularLocation>
</comment>
<comment type="similarity">
    <text evidence="1">Belongs to the bacterial CoaD family.</text>
</comment>